<name>GCK_PYRHO</name>
<comment type="function">
    <text evidence="2">Catalyzes the ATP-dependent phosphorylation of D-glycerate to 2-phosphoglycerate. It can also utilize GTP, CTP, UTP, ADP or pyrophosphate as phosphate donor.</text>
</comment>
<comment type="catalytic activity">
    <reaction evidence="2">
        <text>(R)-glycerate + ATP = (2R)-2-phosphoglycerate + ADP + H(+)</text>
        <dbReference type="Rhea" id="RHEA:27377"/>
        <dbReference type="ChEBI" id="CHEBI:15378"/>
        <dbReference type="ChEBI" id="CHEBI:16659"/>
        <dbReference type="ChEBI" id="CHEBI:30616"/>
        <dbReference type="ChEBI" id="CHEBI:58289"/>
        <dbReference type="ChEBI" id="CHEBI:456216"/>
        <dbReference type="EC" id="2.7.1.165"/>
    </reaction>
</comment>
<comment type="cofactor">
    <cofactor evidence="2">
        <name>Mg(2+)</name>
        <dbReference type="ChEBI" id="CHEBI:18420"/>
    </cofactor>
    <cofactor evidence="2">
        <name>Ni(2+)</name>
        <dbReference type="ChEBI" id="CHEBI:49786"/>
    </cofactor>
    <cofactor evidence="2">
        <name>Mn(2+)</name>
        <dbReference type="ChEBI" id="CHEBI:29035"/>
    </cofactor>
    <cofactor evidence="2">
        <name>Co(2+)</name>
        <dbReference type="ChEBI" id="CHEBI:48828"/>
    </cofactor>
    <text evidence="2">Magnesium. It could be replaced to some extent by nickel, manganese or cobalt.</text>
</comment>
<comment type="biophysicochemical properties">
    <kinetics>
        <KM evidence="2">44 uM for glycerate (at 45 degrees Celsius and at pH 7.0)</KM>
        <KM evidence="2">102 uM for ATP (at 45 degrees Celsius and at pH 7.0)</KM>
        <Vmax evidence="2">624.0 umol/min/mg enzyme with glycerate as substrate (at 45 degrees Celsius and at pH 7.0)</Vmax>
        <Vmax evidence="2">639.0 umol/min/mg enzyme with ATP as substrate (at 45 degrees Celsius and at pH 7.0)</Vmax>
    </kinetics>
    <phDependence>
        <text evidence="2">Optimum pH is 7.0 and half of the maximum activity remains at pH 6-10.</text>
    </phDependence>
    <temperatureDependence>
        <text evidence="2">Optimum temperature is 45 degrees Celsius. It has strong activity at moderate temperature 30-50 degrees Celsius and about half of the maximal activity is retained at 100 degrees Celsius.</text>
    </temperatureDependence>
</comment>
<comment type="subunit">
    <text evidence="4">Homodimer.</text>
</comment>
<comment type="similarity">
    <text evidence="3">Belongs to the glycerate kinase type-1 family.</text>
</comment>
<sequence>MIAMDIREIGLRLVGEAIKAADPYRAVLNAVKVSDDKIIVQGKEFEIKGKVYVIALGKAACEMARAIEDILDVEDGVAVTKYGYGKELKRIKVIEAGHPIPDEKSILGAKEALSILNRARENDIVFILISGGGSALFELPEEGISLEDLKLTTDLLLKSGAKIHEINTVRKHISKVKGGKLAKMIKGTGIVLIISDVVGDNLEAIASGPTVKDPTTFEDAKRILELYDIWEKVPESVRLHIERGLRGEVEETLKEDLPNVHNFLIASNSISCEAIAREAQRLGFKAYIMTTTLEGEAKDAGLFIGSIVQEIAERGRPFEPPVVLVFGGETTVTIEGKGGKGGPNQEIALSATRKISDLEALIVAFDTDGTDGPTDAAGGIVDGTTYKKLREKGIDVEKVLKEHNSYEALKKVGGLLFTGPTGTNVNSIVIAIVTSKRGRT</sequence>
<reference key="1">
    <citation type="journal article" date="1998" name="DNA Res.">
        <title>Complete sequence and gene organization of the genome of a hyper-thermophilic archaebacterium, Pyrococcus horikoshii OT3.</title>
        <authorList>
            <person name="Kawarabayasi Y."/>
            <person name="Sawada M."/>
            <person name="Horikawa H."/>
            <person name="Haikawa Y."/>
            <person name="Hino Y."/>
            <person name="Yamamoto S."/>
            <person name="Sekine M."/>
            <person name="Baba S."/>
            <person name="Kosugi H."/>
            <person name="Hosoyama A."/>
            <person name="Nagai Y."/>
            <person name="Sakai M."/>
            <person name="Ogura K."/>
            <person name="Otsuka R."/>
            <person name="Nakazawa H."/>
            <person name="Takamiya M."/>
            <person name="Ohfuku Y."/>
            <person name="Funahashi T."/>
            <person name="Tanaka T."/>
            <person name="Kudoh Y."/>
            <person name="Yamazaki J."/>
            <person name="Kushida N."/>
            <person name="Oguchi A."/>
            <person name="Aoki K."/>
            <person name="Yoshizawa T."/>
            <person name="Nakamura Y."/>
            <person name="Robb F.T."/>
            <person name="Horikoshi K."/>
            <person name="Masuchi Y."/>
            <person name="Shizuya H."/>
            <person name="Kikuchi H."/>
        </authorList>
    </citation>
    <scope>NUCLEOTIDE SEQUENCE [LARGE SCALE GENOMIC DNA]</scope>
    <source>
        <strain>ATCC 700860 / DSM 12428 / JCM 9974 / NBRC 100139 / OT-3</strain>
    </source>
</reference>
<reference key="2">
    <citation type="journal article" date="2007" name="Extremophiles">
        <title>A unique highly thermostable 2-phosphoglycerate forming glycerate kinase from the hyperthermophilic archaeon Pyrococcus horikoshii: gene cloning, expression and characterization.</title>
        <authorList>
            <person name="Liu B."/>
            <person name="Hong Y."/>
            <person name="Wu L."/>
            <person name="Li Z."/>
            <person name="Ni J."/>
            <person name="Sheng D."/>
            <person name="Shen Y."/>
        </authorList>
    </citation>
    <scope>FUNCTION AS A GLYCERATE KINASE</scope>
    <scope>CATALYTIC ACTIVITY</scope>
    <scope>BIOPHYSICOCHEMICAL PROPERTIES</scope>
    <scope>COFACTOR</scope>
    <scope>SUBSTRATE SPECIFICITY</scope>
    <scope>SUBUNIT</scope>
    <scope>NOMENCLATURE</scope>
    <source>
        <strain>ATCC 700860 / DSM 12428 / JCM 9974 / NBRC 100139 / OT-3</strain>
    </source>
</reference>
<reference key="3">
    <citation type="submission" date="2005-05" db="PDB data bank">
        <title>Crystal structure of the PH0495 protein from Pyrococccus horikoshii OT3.</title>
        <authorList>
            <person name="Mizutani H."/>
            <person name="Kunishima N."/>
        </authorList>
    </citation>
    <scope>X-RAY CRYSTALLOGRAPHY (2.10 ANGSTROMS)</scope>
    <source>
        <strain>ATCC 700860 / DSM 12428 / JCM 9974 / NBRC 100139 / OT-3</strain>
    </source>
</reference>
<gene>
    <name type="primary">gck</name>
    <name type="ordered locus">PH0495</name>
</gene>
<feature type="chain" id="PRO_0000415150" description="Glycerate 2-kinase">
    <location>
        <begin position="1"/>
        <end position="440"/>
    </location>
</feature>
<feature type="binding site" evidence="1">
    <location>
        <position position="58"/>
    </location>
    <ligand>
        <name>substrate</name>
    </ligand>
</feature>
<feature type="helix" evidence="5">
    <location>
        <begin position="6"/>
        <end position="20"/>
    </location>
</feature>
<feature type="helix" evidence="5">
    <location>
        <begin position="23"/>
        <end position="30"/>
    </location>
</feature>
<feature type="strand" evidence="5">
    <location>
        <begin position="31"/>
        <end position="33"/>
    </location>
</feature>
<feature type="strand" evidence="5">
    <location>
        <begin position="35"/>
        <end position="40"/>
    </location>
</feature>
<feature type="strand" evidence="5">
    <location>
        <begin position="43"/>
        <end position="46"/>
    </location>
</feature>
<feature type="strand" evidence="5">
    <location>
        <begin position="51"/>
        <end position="57"/>
    </location>
</feature>
<feature type="helix" evidence="5">
    <location>
        <begin position="60"/>
        <end position="70"/>
    </location>
</feature>
<feature type="strand" evidence="5">
    <location>
        <begin position="74"/>
        <end position="81"/>
    </location>
</feature>
<feature type="strand" evidence="5">
    <location>
        <begin position="89"/>
        <end position="96"/>
    </location>
</feature>
<feature type="strand" evidence="5">
    <location>
        <begin position="98"/>
        <end position="100"/>
    </location>
</feature>
<feature type="helix" evidence="5">
    <location>
        <begin position="103"/>
        <end position="118"/>
    </location>
</feature>
<feature type="strand" evidence="5">
    <location>
        <begin position="123"/>
        <end position="129"/>
    </location>
</feature>
<feature type="helix" evidence="5">
    <location>
        <begin position="133"/>
        <end position="136"/>
    </location>
</feature>
<feature type="helix" evidence="5">
    <location>
        <begin position="146"/>
        <end position="158"/>
    </location>
</feature>
<feature type="helix" evidence="5">
    <location>
        <begin position="163"/>
        <end position="171"/>
    </location>
</feature>
<feature type="strand" evidence="5">
    <location>
        <begin position="174"/>
        <end position="176"/>
    </location>
</feature>
<feature type="turn" evidence="5">
    <location>
        <begin position="177"/>
        <end position="179"/>
    </location>
</feature>
<feature type="helix" evidence="5">
    <location>
        <begin position="180"/>
        <end position="183"/>
    </location>
</feature>
<feature type="strand" evidence="5">
    <location>
        <begin position="186"/>
        <end position="194"/>
    </location>
</feature>
<feature type="turn" evidence="5">
    <location>
        <begin position="202"/>
        <end position="204"/>
    </location>
</feature>
<feature type="helix" evidence="5">
    <location>
        <begin position="205"/>
        <end position="207"/>
    </location>
</feature>
<feature type="helix" evidence="5">
    <location>
        <begin position="217"/>
        <end position="226"/>
    </location>
</feature>
<feature type="turn" evidence="5">
    <location>
        <begin position="230"/>
        <end position="232"/>
    </location>
</feature>
<feature type="helix" evidence="5">
    <location>
        <begin position="235"/>
        <end position="245"/>
    </location>
</feature>
<feature type="strand" evidence="5">
    <location>
        <begin position="260"/>
        <end position="266"/>
    </location>
</feature>
<feature type="helix" evidence="5">
    <location>
        <begin position="268"/>
        <end position="281"/>
    </location>
</feature>
<feature type="strand" evidence="5">
    <location>
        <begin position="285"/>
        <end position="293"/>
    </location>
</feature>
<feature type="helix" evidence="5">
    <location>
        <begin position="297"/>
        <end position="314"/>
    </location>
</feature>
<feature type="strand" evidence="5">
    <location>
        <begin position="320"/>
        <end position="328"/>
    </location>
</feature>
<feature type="strand" evidence="5">
    <location>
        <begin position="335"/>
        <end position="337"/>
    </location>
</feature>
<feature type="helix" evidence="5">
    <location>
        <begin position="343"/>
        <end position="351"/>
    </location>
</feature>
<feature type="turn" evidence="5">
    <location>
        <begin position="352"/>
        <end position="357"/>
    </location>
</feature>
<feature type="strand" evidence="5">
    <location>
        <begin position="358"/>
        <end position="366"/>
    </location>
</feature>
<feature type="strand" evidence="5">
    <location>
        <begin position="372"/>
        <end position="375"/>
    </location>
</feature>
<feature type="strand" evidence="5">
    <location>
        <begin position="378"/>
        <end position="382"/>
    </location>
</feature>
<feature type="helix" evidence="5">
    <location>
        <begin position="385"/>
        <end position="391"/>
    </location>
</feature>
<feature type="helix" evidence="5">
    <location>
        <begin position="396"/>
        <end position="401"/>
    </location>
</feature>
<feature type="helix" evidence="5">
    <location>
        <begin position="405"/>
        <end position="411"/>
    </location>
</feature>
<feature type="strand" evidence="5">
    <location>
        <begin position="427"/>
        <end position="435"/>
    </location>
</feature>
<keyword id="KW-0002">3D-structure</keyword>
<keyword id="KW-0067">ATP-binding</keyword>
<keyword id="KW-0418">Kinase</keyword>
<keyword id="KW-0547">Nucleotide-binding</keyword>
<keyword id="KW-0808">Transferase</keyword>
<proteinExistence type="evidence at protein level"/>
<protein>
    <recommendedName>
        <fullName>Glycerate 2-kinase</fullName>
        <shortName>GCK</shortName>
        <ecNumber evidence="2">2.7.1.165</ecNumber>
    </recommendedName>
    <alternativeName>
        <fullName>2-phosphoglycerate forming glycerate kinase</fullName>
    </alternativeName>
</protein>
<accession>O58231</accession>
<organism>
    <name type="scientific">Pyrococcus horikoshii (strain ATCC 700860 / DSM 12428 / JCM 9974 / NBRC 100139 / OT-3)</name>
    <dbReference type="NCBI Taxonomy" id="70601"/>
    <lineage>
        <taxon>Archaea</taxon>
        <taxon>Methanobacteriati</taxon>
        <taxon>Methanobacteriota</taxon>
        <taxon>Thermococci</taxon>
        <taxon>Thermococcales</taxon>
        <taxon>Thermococcaceae</taxon>
        <taxon>Pyrococcus</taxon>
    </lineage>
</organism>
<dbReference type="EC" id="2.7.1.165" evidence="2"/>
<dbReference type="EMBL" id="BA000001">
    <property type="protein sequence ID" value="BAA29583.1"/>
    <property type="molecule type" value="Genomic_DNA"/>
</dbReference>
<dbReference type="PIR" id="B71162">
    <property type="entry name" value="B71162"/>
</dbReference>
<dbReference type="PDB" id="1X3L">
    <property type="method" value="X-ray"/>
    <property type="resolution" value="2.10 A"/>
    <property type="chains" value="A=1-440"/>
</dbReference>
<dbReference type="PDBsum" id="1X3L"/>
<dbReference type="SMR" id="O58231"/>
<dbReference type="STRING" id="70601.gene:9377429"/>
<dbReference type="EnsemblBacteria" id="BAA29583">
    <property type="protein sequence ID" value="BAA29583"/>
    <property type="gene ID" value="BAA29583"/>
</dbReference>
<dbReference type="KEGG" id="pho:PH0495"/>
<dbReference type="eggNOG" id="arCOG04170">
    <property type="taxonomic scope" value="Archaea"/>
</dbReference>
<dbReference type="BRENDA" id="2.7.1.165">
    <property type="organism ID" value="5244"/>
</dbReference>
<dbReference type="EvolutionaryTrace" id="O58231"/>
<dbReference type="Proteomes" id="UP000000752">
    <property type="component" value="Chromosome"/>
</dbReference>
<dbReference type="GO" id="GO:0005737">
    <property type="term" value="C:cytoplasm"/>
    <property type="evidence" value="ECO:0007669"/>
    <property type="project" value="TreeGrafter"/>
</dbReference>
<dbReference type="GO" id="GO:0005524">
    <property type="term" value="F:ATP binding"/>
    <property type="evidence" value="ECO:0007669"/>
    <property type="project" value="UniProtKB-KW"/>
</dbReference>
<dbReference type="GO" id="GO:0043798">
    <property type="term" value="F:glycerate 2-kinase activity"/>
    <property type="evidence" value="ECO:0000314"/>
    <property type="project" value="UniProtKB"/>
</dbReference>
<dbReference type="GO" id="GO:0008887">
    <property type="term" value="F:glycerate kinase activity"/>
    <property type="evidence" value="ECO:0007669"/>
    <property type="project" value="InterPro"/>
</dbReference>
<dbReference type="FunFam" id="3.40.1480.10:FF:000003">
    <property type="entry name" value="D-glycerate 2-kinase"/>
    <property type="match status" value="1"/>
</dbReference>
<dbReference type="FunFam" id="3.40.50.10180:FF:000001">
    <property type="entry name" value="Glycerate kinase"/>
    <property type="match status" value="1"/>
</dbReference>
<dbReference type="Gene3D" id="3.40.50.10180">
    <property type="entry name" value="Glycerate kinase, MOFRL-like N-terminal domain"/>
    <property type="match status" value="1"/>
</dbReference>
<dbReference type="Gene3D" id="3.40.1480.10">
    <property type="entry name" value="MOFRL domain"/>
    <property type="match status" value="1"/>
</dbReference>
<dbReference type="InterPro" id="IPR037035">
    <property type="entry name" value="GK-like_C_sf"/>
</dbReference>
<dbReference type="InterPro" id="IPR038614">
    <property type="entry name" value="GK_N_sf"/>
</dbReference>
<dbReference type="InterPro" id="IPR007835">
    <property type="entry name" value="MOFRL"/>
</dbReference>
<dbReference type="InterPro" id="IPR025286">
    <property type="entry name" value="MOFRL_assoc_dom"/>
</dbReference>
<dbReference type="InterPro" id="IPR039760">
    <property type="entry name" value="MOFRL_protein"/>
</dbReference>
<dbReference type="PANTHER" id="PTHR12227">
    <property type="entry name" value="GLYCERATE KINASE"/>
    <property type="match status" value="1"/>
</dbReference>
<dbReference type="PANTHER" id="PTHR12227:SF0">
    <property type="entry name" value="GLYCERATE KINASE"/>
    <property type="match status" value="1"/>
</dbReference>
<dbReference type="Pfam" id="PF13660">
    <property type="entry name" value="DUF4147"/>
    <property type="match status" value="1"/>
</dbReference>
<dbReference type="Pfam" id="PF05161">
    <property type="entry name" value="MOFRL"/>
    <property type="match status" value="1"/>
</dbReference>
<dbReference type="SUPFAM" id="SSF82544">
    <property type="entry name" value="GckA/TtuD-like"/>
    <property type="match status" value="1"/>
</dbReference>
<evidence type="ECO:0000250" key="1"/>
<evidence type="ECO:0000269" key="2">
    <source>
    </source>
</evidence>
<evidence type="ECO:0000305" key="3"/>
<evidence type="ECO:0000305" key="4">
    <source>
    </source>
</evidence>
<evidence type="ECO:0007829" key="5">
    <source>
        <dbReference type="PDB" id="1X3L"/>
    </source>
</evidence>